<sequence>MALSVEEKAQIVAEYQQTAGDTGSPEVQVALLTANINKLQGHLKPTTKTTTPVRGLIRMVNHRRKLLDYLKGKDTTRYSALIGRLGLRR</sequence>
<reference key="1">
    <citation type="submission" date="1998-09" db="EMBL/GenBank/DDBJ databases">
        <title>Identification and cloning of genes involved in RNA turnover in Pseudomonas putida.</title>
        <authorList>
            <person name="Favaro R."/>
            <person name="Deho' G."/>
        </authorList>
    </citation>
    <scope>NUCLEOTIDE SEQUENCE [GENOMIC DNA]</scope>
    <source>
        <strain>TMB</strain>
    </source>
</reference>
<feature type="chain" id="PRO_0000115512" description="Small ribosomal subunit protein uS15">
    <location>
        <begin position="1"/>
        <end position="89"/>
    </location>
</feature>
<protein>
    <recommendedName>
        <fullName evidence="1">Small ribosomal subunit protein uS15</fullName>
    </recommendedName>
    <alternativeName>
        <fullName evidence="2">30S ribosomal protein S15</fullName>
    </alternativeName>
</protein>
<name>RS15_PSEPU</name>
<dbReference type="EMBL" id="Y18132">
    <property type="protein sequence ID" value="CAA77047.1"/>
    <property type="molecule type" value="Genomic_DNA"/>
</dbReference>
<dbReference type="SMR" id="O87791"/>
<dbReference type="GO" id="GO:0022627">
    <property type="term" value="C:cytosolic small ribosomal subunit"/>
    <property type="evidence" value="ECO:0007669"/>
    <property type="project" value="TreeGrafter"/>
</dbReference>
<dbReference type="GO" id="GO:0019843">
    <property type="term" value="F:rRNA binding"/>
    <property type="evidence" value="ECO:0007669"/>
    <property type="project" value="UniProtKB-UniRule"/>
</dbReference>
<dbReference type="GO" id="GO:0003735">
    <property type="term" value="F:structural constituent of ribosome"/>
    <property type="evidence" value="ECO:0007669"/>
    <property type="project" value="InterPro"/>
</dbReference>
<dbReference type="GO" id="GO:0006412">
    <property type="term" value="P:translation"/>
    <property type="evidence" value="ECO:0007669"/>
    <property type="project" value="UniProtKB-UniRule"/>
</dbReference>
<dbReference type="CDD" id="cd00353">
    <property type="entry name" value="Ribosomal_S15p_S13e"/>
    <property type="match status" value="1"/>
</dbReference>
<dbReference type="FunFam" id="1.10.287.10:FF:000002">
    <property type="entry name" value="30S ribosomal protein S15"/>
    <property type="match status" value="1"/>
</dbReference>
<dbReference type="Gene3D" id="6.10.250.3130">
    <property type="match status" value="1"/>
</dbReference>
<dbReference type="Gene3D" id="1.10.287.10">
    <property type="entry name" value="S15/NS1, RNA-binding"/>
    <property type="match status" value="1"/>
</dbReference>
<dbReference type="HAMAP" id="MF_01343_B">
    <property type="entry name" value="Ribosomal_uS15_B"/>
    <property type="match status" value="1"/>
</dbReference>
<dbReference type="InterPro" id="IPR000589">
    <property type="entry name" value="Ribosomal_uS15"/>
</dbReference>
<dbReference type="InterPro" id="IPR005290">
    <property type="entry name" value="Ribosomal_uS15_bac-type"/>
</dbReference>
<dbReference type="InterPro" id="IPR009068">
    <property type="entry name" value="uS15_NS1_RNA-bd_sf"/>
</dbReference>
<dbReference type="NCBIfam" id="TIGR00952">
    <property type="entry name" value="S15_bact"/>
    <property type="match status" value="1"/>
</dbReference>
<dbReference type="PANTHER" id="PTHR23321">
    <property type="entry name" value="RIBOSOMAL PROTEIN S15, BACTERIAL AND ORGANELLAR"/>
    <property type="match status" value="1"/>
</dbReference>
<dbReference type="PANTHER" id="PTHR23321:SF26">
    <property type="entry name" value="SMALL RIBOSOMAL SUBUNIT PROTEIN US15M"/>
    <property type="match status" value="1"/>
</dbReference>
<dbReference type="Pfam" id="PF00312">
    <property type="entry name" value="Ribosomal_S15"/>
    <property type="match status" value="1"/>
</dbReference>
<dbReference type="SMART" id="SM01387">
    <property type="entry name" value="Ribosomal_S15"/>
    <property type="match status" value="1"/>
</dbReference>
<dbReference type="SUPFAM" id="SSF47060">
    <property type="entry name" value="S15/NS1 RNA-binding domain"/>
    <property type="match status" value="1"/>
</dbReference>
<evidence type="ECO:0000255" key="1">
    <source>
        <dbReference type="HAMAP-Rule" id="MF_01343"/>
    </source>
</evidence>
<evidence type="ECO:0000305" key="2"/>
<gene>
    <name evidence="1" type="primary">rpsO</name>
</gene>
<proteinExistence type="inferred from homology"/>
<organism>
    <name type="scientific">Pseudomonas putida</name>
    <name type="common">Arthrobacter siderocapsulatus</name>
    <dbReference type="NCBI Taxonomy" id="303"/>
    <lineage>
        <taxon>Bacteria</taxon>
        <taxon>Pseudomonadati</taxon>
        <taxon>Pseudomonadota</taxon>
        <taxon>Gammaproteobacteria</taxon>
        <taxon>Pseudomonadales</taxon>
        <taxon>Pseudomonadaceae</taxon>
        <taxon>Pseudomonas</taxon>
    </lineage>
</organism>
<accession>O87791</accession>
<comment type="function">
    <text evidence="1">One of the primary rRNA binding proteins, it binds directly to 16S rRNA where it helps nucleate assembly of the platform of the 30S subunit by binding and bridging several RNA helices of the 16S rRNA.</text>
</comment>
<comment type="function">
    <text evidence="1">Forms an intersubunit bridge (bridge B4) with the 23S rRNA of the 50S subunit in the ribosome.</text>
</comment>
<comment type="subunit">
    <text evidence="1">Part of the 30S ribosomal subunit. Forms a bridge to the 50S subunit in the 70S ribosome, contacting the 23S rRNA.</text>
</comment>
<comment type="similarity">
    <text evidence="1">Belongs to the universal ribosomal protein uS15 family.</text>
</comment>
<keyword id="KW-0687">Ribonucleoprotein</keyword>
<keyword id="KW-0689">Ribosomal protein</keyword>
<keyword id="KW-0694">RNA-binding</keyword>
<keyword id="KW-0699">rRNA-binding</keyword>